<keyword id="KW-1185">Reference proteome</keyword>
<comment type="similarity">
    <text evidence="1">Belongs to the UPF0246 family.</text>
</comment>
<gene>
    <name type="ordered locus">NGO_0461</name>
</gene>
<name>Y461_NEIG1</name>
<accession>Q5F9D8</accession>
<feature type="chain" id="PRO_0000262035" description="UPF0246 protein NGO_0461">
    <location>
        <begin position="1"/>
        <end position="259"/>
    </location>
</feature>
<dbReference type="EMBL" id="AE004969">
    <property type="protein sequence ID" value="AAW89199.1"/>
    <property type="molecule type" value="Genomic_DNA"/>
</dbReference>
<dbReference type="RefSeq" id="YP_207611.1">
    <property type="nucleotide sequence ID" value="NC_002946.2"/>
</dbReference>
<dbReference type="SMR" id="Q5F9D8"/>
<dbReference type="STRING" id="242231.NGO_0461"/>
<dbReference type="KEGG" id="ngo:NGO_0461"/>
<dbReference type="PATRIC" id="fig|242231.10.peg.552"/>
<dbReference type="HOGENOM" id="CLU_061989_0_0_4"/>
<dbReference type="Proteomes" id="UP000000535">
    <property type="component" value="Chromosome"/>
</dbReference>
<dbReference type="GO" id="GO:0005829">
    <property type="term" value="C:cytosol"/>
    <property type="evidence" value="ECO:0007669"/>
    <property type="project" value="TreeGrafter"/>
</dbReference>
<dbReference type="GO" id="GO:0033194">
    <property type="term" value="P:response to hydroperoxide"/>
    <property type="evidence" value="ECO:0007669"/>
    <property type="project" value="TreeGrafter"/>
</dbReference>
<dbReference type="HAMAP" id="MF_00652">
    <property type="entry name" value="UPF0246"/>
    <property type="match status" value="1"/>
</dbReference>
<dbReference type="InterPro" id="IPR005583">
    <property type="entry name" value="YaaA"/>
</dbReference>
<dbReference type="NCBIfam" id="NF002541">
    <property type="entry name" value="PRK02101.1-1"/>
    <property type="match status" value="1"/>
</dbReference>
<dbReference type="NCBIfam" id="NF002542">
    <property type="entry name" value="PRK02101.1-3"/>
    <property type="match status" value="1"/>
</dbReference>
<dbReference type="PANTHER" id="PTHR30283:SF4">
    <property type="entry name" value="PEROXIDE STRESS RESISTANCE PROTEIN YAAA"/>
    <property type="match status" value="1"/>
</dbReference>
<dbReference type="PANTHER" id="PTHR30283">
    <property type="entry name" value="PEROXIDE STRESS RESPONSE PROTEIN YAAA"/>
    <property type="match status" value="1"/>
</dbReference>
<dbReference type="Pfam" id="PF03883">
    <property type="entry name" value="H2O2_YaaD"/>
    <property type="match status" value="1"/>
</dbReference>
<sequence length="259" mass="29630">MFFVLSPAKNLNEKDPCPVSEFTQPDLLAESEILMRQLRELAPQQIAELMHVSDKIALLNAERNAAWHTPFTPENAKQAVFMFNGDVYEGMDANTLNTNQIQYLQGHVRLLSGLYGLLRPLDLIQPYRLEMGTSFANLRGKNLYEFWGGIITNLLNDTLAQAGSNTLVNLASQEYFKSVNTKKLRARLITPIFKDEKNGKYKIISFYAKRARGLMVRYAAEHNITDPEMLKNFNYEGYAFNDAASNESEWVFMRSEQIK</sequence>
<protein>
    <recommendedName>
        <fullName evidence="1">UPF0246 protein NGO_0461</fullName>
    </recommendedName>
</protein>
<organism>
    <name type="scientific">Neisseria gonorrhoeae (strain ATCC 700825 / FA 1090)</name>
    <dbReference type="NCBI Taxonomy" id="242231"/>
    <lineage>
        <taxon>Bacteria</taxon>
        <taxon>Pseudomonadati</taxon>
        <taxon>Pseudomonadota</taxon>
        <taxon>Betaproteobacteria</taxon>
        <taxon>Neisseriales</taxon>
        <taxon>Neisseriaceae</taxon>
        <taxon>Neisseria</taxon>
    </lineage>
</organism>
<reference key="1">
    <citation type="submission" date="2003-03" db="EMBL/GenBank/DDBJ databases">
        <title>The complete genome sequence of Neisseria gonorrhoeae.</title>
        <authorList>
            <person name="Lewis L.A."/>
            <person name="Gillaspy A.F."/>
            <person name="McLaughlin R.E."/>
            <person name="Gipson M."/>
            <person name="Ducey T.F."/>
            <person name="Ownbey T."/>
            <person name="Hartman K."/>
            <person name="Nydick C."/>
            <person name="Carson M.B."/>
            <person name="Vaughn J."/>
            <person name="Thomson C."/>
            <person name="Song L."/>
            <person name="Lin S."/>
            <person name="Yuan X."/>
            <person name="Najar F."/>
            <person name="Zhan M."/>
            <person name="Ren Q."/>
            <person name="Zhu H."/>
            <person name="Qi S."/>
            <person name="Kenton S.M."/>
            <person name="Lai H."/>
            <person name="White J.D."/>
            <person name="Clifton S."/>
            <person name="Roe B.A."/>
            <person name="Dyer D.W."/>
        </authorList>
    </citation>
    <scope>NUCLEOTIDE SEQUENCE [LARGE SCALE GENOMIC DNA]</scope>
    <source>
        <strain>ATCC 700825 / FA 1090</strain>
    </source>
</reference>
<evidence type="ECO:0000255" key="1">
    <source>
        <dbReference type="HAMAP-Rule" id="MF_00652"/>
    </source>
</evidence>
<proteinExistence type="inferred from homology"/>